<proteinExistence type="inferred from homology"/>
<keyword id="KW-0025">Alternative splicing</keyword>
<keyword id="KW-1048">Host nucleus</keyword>
<keyword id="KW-0945">Host-virus interaction</keyword>
<keyword id="KW-0813">Transport</keyword>
<keyword id="KW-0946">Virion</keyword>
<gene>
    <name evidence="1" type="primary">NS</name>
</gene>
<organism>
    <name type="scientific">Influenza A virus (strain A/Japan/305/1957 H2N2)</name>
    <dbReference type="NCBI Taxonomy" id="387161"/>
    <lineage>
        <taxon>Viruses</taxon>
        <taxon>Riboviria</taxon>
        <taxon>Orthornavirae</taxon>
        <taxon>Negarnaviricota</taxon>
        <taxon>Polyploviricotina</taxon>
        <taxon>Insthoviricetes</taxon>
        <taxon>Articulavirales</taxon>
        <taxon>Orthomyxoviridae</taxon>
        <taxon>Alphainfluenzavirus</taxon>
        <taxon>Alphainfluenzavirus influenzae</taxon>
        <taxon>Influenza A virus</taxon>
    </lineage>
</organism>
<evidence type="ECO:0000255" key="1">
    <source>
        <dbReference type="HAMAP-Rule" id="MF_04067"/>
    </source>
</evidence>
<name>NEP_I57A0</name>
<sequence length="121" mass="14351">MDPNTVSSFQDILMRMSKMQLGSSSEDLNGMITQFESLKLYRDSLGEAVMRMGDLHSLQNRNGKWREQLGQKFEEIRWLIEEVRHKLKITENSFEQITFMQALQLLFEVEQEIRTFSFQLI</sequence>
<feature type="chain" id="PRO_0000324197" description="Nuclear export protein">
    <location>
        <begin position="1"/>
        <end position="121"/>
    </location>
</feature>
<feature type="short sequence motif" description="Nuclear export signal" evidence="1">
    <location>
        <begin position="12"/>
        <end position="21"/>
    </location>
</feature>
<feature type="short sequence motif" description="Nuclear export signal" evidence="1">
    <location>
        <begin position="85"/>
        <end position="94"/>
    </location>
</feature>
<dbReference type="EMBL" id="DQ508845">
    <property type="protein sequence ID" value="ABF21203.1"/>
    <property type="molecule type" value="Genomic_RNA"/>
</dbReference>
<dbReference type="SMR" id="Q1K9P8"/>
<dbReference type="Proteomes" id="UP000118104">
    <property type="component" value="Genome"/>
</dbReference>
<dbReference type="GO" id="GO:0042025">
    <property type="term" value="C:host cell nucleus"/>
    <property type="evidence" value="ECO:0007669"/>
    <property type="project" value="UniProtKB-SubCell"/>
</dbReference>
<dbReference type="GO" id="GO:0044423">
    <property type="term" value="C:virion component"/>
    <property type="evidence" value="ECO:0007669"/>
    <property type="project" value="UniProtKB-UniRule"/>
</dbReference>
<dbReference type="GO" id="GO:0039675">
    <property type="term" value="P:exit of virus from host cell nucleus through nuclear pore"/>
    <property type="evidence" value="ECO:0007669"/>
    <property type="project" value="UniProtKB-UniRule"/>
</dbReference>
<dbReference type="Gene3D" id="1.10.287.230">
    <property type="match status" value="1"/>
</dbReference>
<dbReference type="Gene3D" id="1.10.287.10">
    <property type="entry name" value="S15/NS1, RNA-binding"/>
    <property type="match status" value="1"/>
</dbReference>
<dbReference type="HAMAP" id="MF_04067">
    <property type="entry name" value="INFV_NEP"/>
    <property type="match status" value="1"/>
</dbReference>
<dbReference type="InterPro" id="IPR000968">
    <property type="entry name" value="Flu_NS2"/>
</dbReference>
<dbReference type="Pfam" id="PF00601">
    <property type="entry name" value="Flu_NS2"/>
    <property type="match status" value="1"/>
</dbReference>
<dbReference type="SUPFAM" id="SSF101156">
    <property type="entry name" value="Nonstructural protein ns2, Nep, M1-binding domain"/>
    <property type="match status" value="1"/>
</dbReference>
<comment type="function">
    <text evidence="1">Mediates the nuclear export of encapsidated genomic RNAs (ribonucleoproteins, RNPs). Acts as an adapter between viral RNPs complexes and the nuclear export machinery of the cell. Possesses no intrinsic RNA-binding activity, but includes a C-terminal M1-binding domain. This domain is believed to allow recognition of RNPs bound to the protein M1. Since protein M1 is not available in large quantities before late stages of infection, such an indirect recognition mechanism probably ensures that genomic RNPs are not exported from the host nucleus until sufficient quantities of viral mRNA and progeny genomic RNA have been synthesized. Furthermore, the RNPs enter the host cytoplasm only when associated with the M1 protein that is necessary to guide them to the plasma membrane. May down-regulate viral RNA synthesis when overproduced.</text>
</comment>
<comment type="subunit">
    <text evidence="1">Interacts with protein M1. May interact with host nucleoporin RAB/HRB and exportin XPO1/CRM1.</text>
</comment>
<comment type="subcellular location">
    <subcellularLocation>
        <location evidence="1">Virion</location>
    </subcellularLocation>
    <subcellularLocation>
        <location evidence="1">Host nucleus</location>
    </subcellularLocation>
</comment>
<comment type="alternative products">
    <event type="alternative splicing"/>
    <isoform>
        <id>Q1K9P8-1</id>
        <name>NEP</name>
        <name>NS2</name>
        <sequence type="displayed"/>
    </isoform>
    <isoform>
        <id>Q1K9P7-1</id>
        <name>NS1</name>
        <sequence type="external"/>
    </isoform>
</comment>
<comment type="similarity">
    <text evidence="1">Belongs to the influenza viruses NEP family.</text>
</comment>
<reference key="1">
    <citation type="submission" date="2006-04" db="EMBL/GenBank/DDBJ databases">
        <title>Complete genome sequencing and analysis of selected Influenza Virus vaccine strains spanning six decades (1933-1999).</title>
        <authorList>
            <person name="Mbawuike I.N."/>
            <person name="Zhang Y."/>
            <person name="Yamada R.E."/>
            <person name="Nino D."/>
            <person name="Bui H.-H."/>
            <person name="Sette A."/>
            <person name="Couch R.B."/>
        </authorList>
    </citation>
    <scope>NUCLEOTIDE SEQUENCE [GENOMIC RNA]</scope>
</reference>
<accession>Q1K9P8</accession>
<protein>
    <recommendedName>
        <fullName evidence="1">Nuclear export protein</fullName>
        <shortName evidence="1">NEP</shortName>
    </recommendedName>
    <alternativeName>
        <fullName evidence="1">Non-structural protein 2</fullName>
        <shortName evidence="1">NS2</shortName>
    </alternativeName>
</protein>
<organismHost>
    <name type="scientific">Aves</name>
    <dbReference type="NCBI Taxonomy" id="8782"/>
</organismHost>
<organismHost>
    <name type="scientific">Homo sapiens</name>
    <name type="common">Human</name>
    <dbReference type="NCBI Taxonomy" id="9606"/>
</organismHost>